<name>FPG_ECOBW</name>
<feature type="initiator methionine" description="Removed" evidence="1">
    <location>
        <position position="1"/>
    </location>
</feature>
<feature type="chain" id="PRO_1000202823" description="Formamidopyrimidine-DNA glycosylase">
    <location>
        <begin position="2"/>
        <end position="269"/>
    </location>
</feature>
<feature type="zinc finger region" description="FPG-type" evidence="2">
    <location>
        <begin position="235"/>
        <end position="269"/>
    </location>
</feature>
<feature type="active site" description="Schiff-base intermediate with DNA" evidence="2">
    <location>
        <position position="2"/>
    </location>
</feature>
<feature type="active site" description="Proton donor" evidence="2">
    <location>
        <position position="3"/>
    </location>
</feature>
<feature type="active site" description="Proton donor; for beta-elimination activity" evidence="2">
    <location>
        <position position="57"/>
    </location>
</feature>
<feature type="active site" description="Proton donor; for delta-elimination activity" evidence="2">
    <location>
        <position position="259"/>
    </location>
</feature>
<feature type="binding site" evidence="2">
    <location>
        <position position="90"/>
    </location>
    <ligand>
        <name>DNA</name>
        <dbReference type="ChEBI" id="CHEBI:16991"/>
    </ligand>
</feature>
<feature type="binding site" evidence="2">
    <location>
        <position position="109"/>
    </location>
    <ligand>
        <name>DNA</name>
        <dbReference type="ChEBI" id="CHEBI:16991"/>
    </ligand>
</feature>
<feature type="binding site" evidence="2">
    <location>
        <position position="150"/>
    </location>
    <ligand>
        <name>DNA</name>
        <dbReference type="ChEBI" id="CHEBI:16991"/>
    </ligand>
</feature>
<reference key="1">
    <citation type="journal article" date="2009" name="J. Bacteriol.">
        <title>Genomic sequencing reveals regulatory mutations and recombinational events in the widely used MC4100 lineage of Escherichia coli K-12.</title>
        <authorList>
            <person name="Ferenci T."/>
            <person name="Zhou Z."/>
            <person name="Betteridge T."/>
            <person name="Ren Y."/>
            <person name="Liu Y."/>
            <person name="Feng L."/>
            <person name="Reeves P.R."/>
            <person name="Wang L."/>
        </authorList>
    </citation>
    <scope>NUCLEOTIDE SEQUENCE [LARGE SCALE GENOMIC DNA]</scope>
    <source>
        <strain>K12 / MC4100 / BW2952</strain>
    </source>
</reference>
<gene>
    <name evidence="2" type="primary">mutM</name>
    <name evidence="2" type="synonym">fpg</name>
    <name type="ordered locus">BWG_3326</name>
</gene>
<dbReference type="EC" id="3.2.2.23" evidence="2"/>
<dbReference type="EC" id="4.2.99.18" evidence="2"/>
<dbReference type="EMBL" id="CP001396">
    <property type="protein sequence ID" value="ACR63123.1"/>
    <property type="molecule type" value="Genomic_DNA"/>
</dbReference>
<dbReference type="RefSeq" id="WP_001114543.1">
    <property type="nucleotide sequence ID" value="NC_012759.1"/>
</dbReference>
<dbReference type="SMR" id="C4ZXM7"/>
<dbReference type="GeneID" id="75202204"/>
<dbReference type="KEGG" id="ebw:BWG_3326"/>
<dbReference type="HOGENOM" id="CLU_038423_1_1_6"/>
<dbReference type="GO" id="GO:0034039">
    <property type="term" value="F:8-oxo-7,8-dihydroguanine DNA N-glycosylase activity"/>
    <property type="evidence" value="ECO:0007669"/>
    <property type="project" value="TreeGrafter"/>
</dbReference>
<dbReference type="GO" id="GO:0140078">
    <property type="term" value="F:class I DNA-(apurinic or apyrimidinic site) endonuclease activity"/>
    <property type="evidence" value="ECO:0007669"/>
    <property type="project" value="UniProtKB-EC"/>
</dbReference>
<dbReference type="GO" id="GO:0003684">
    <property type="term" value="F:damaged DNA binding"/>
    <property type="evidence" value="ECO:0007669"/>
    <property type="project" value="InterPro"/>
</dbReference>
<dbReference type="GO" id="GO:0008270">
    <property type="term" value="F:zinc ion binding"/>
    <property type="evidence" value="ECO:0007669"/>
    <property type="project" value="UniProtKB-UniRule"/>
</dbReference>
<dbReference type="GO" id="GO:0006284">
    <property type="term" value="P:base-excision repair"/>
    <property type="evidence" value="ECO:0007669"/>
    <property type="project" value="InterPro"/>
</dbReference>
<dbReference type="CDD" id="cd08966">
    <property type="entry name" value="EcFpg-like_N"/>
    <property type="match status" value="1"/>
</dbReference>
<dbReference type="FunFam" id="1.10.8.50:FF:000003">
    <property type="entry name" value="Formamidopyrimidine-DNA glycosylase"/>
    <property type="match status" value="1"/>
</dbReference>
<dbReference type="FunFam" id="3.20.190.10:FF:000001">
    <property type="entry name" value="Formamidopyrimidine-DNA glycosylase"/>
    <property type="match status" value="1"/>
</dbReference>
<dbReference type="Gene3D" id="1.10.8.50">
    <property type="match status" value="1"/>
</dbReference>
<dbReference type="Gene3D" id="3.20.190.10">
    <property type="entry name" value="MutM-like, N-terminal"/>
    <property type="match status" value="1"/>
</dbReference>
<dbReference type="HAMAP" id="MF_00103">
    <property type="entry name" value="Fapy_DNA_glycosyl"/>
    <property type="match status" value="1"/>
</dbReference>
<dbReference type="InterPro" id="IPR015886">
    <property type="entry name" value="DNA_glyclase/AP_lyase_DNA-bd"/>
</dbReference>
<dbReference type="InterPro" id="IPR015887">
    <property type="entry name" value="DNA_glyclase_Znf_dom_DNA_BS"/>
</dbReference>
<dbReference type="InterPro" id="IPR020629">
    <property type="entry name" value="Formamido-pyr_DNA_Glyclase"/>
</dbReference>
<dbReference type="InterPro" id="IPR012319">
    <property type="entry name" value="FPG_cat"/>
</dbReference>
<dbReference type="InterPro" id="IPR035937">
    <property type="entry name" value="MutM-like_N-ter"/>
</dbReference>
<dbReference type="InterPro" id="IPR010979">
    <property type="entry name" value="Ribosomal_uS13-like_H2TH"/>
</dbReference>
<dbReference type="InterPro" id="IPR000214">
    <property type="entry name" value="Znf_DNA_glyclase/AP_lyase"/>
</dbReference>
<dbReference type="InterPro" id="IPR010663">
    <property type="entry name" value="Znf_FPG/IleRS"/>
</dbReference>
<dbReference type="NCBIfam" id="TIGR00577">
    <property type="entry name" value="fpg"/>
    <property type="match status" value="1"/>
</dbReference>
<dbReference type="NCBIfam" id="NF002211">
    <property type="entry name" value="PRK01103.1"/>
    <property type="match status" value="1"/>
</dbReference>
<dbReference type="PANTHER" id="PTHR22993">
    <property type="entry name" value="FORMAMIDOPYRIMIDINE-DNA GLYCOSYLASE"/>
    <property type="match status" value="1"/>
</dbReference>
<dbReference type="PANTHER" id="PTHR22993:SF9">
    <property type="entry name" value="FORMAMIDOPYRIMIDINE-DNA GLYCOSYLASE"/>
    <property type="match status" value="1"/>
</dbReference>
<dbReference type="Pfam" id="PF01149">
    <property type="entry name" value="Fapy_DNA_glyco"/>
    <property type="match status" value="1"/>
</dbReference>
<dbReference type="Pfam" id="PF06831">
    <property type="entry name" value="H2TH"/>
    <property type="match status" value="1"/>
</dbReference>
<dbReference type="Pfam" id="PF06827">
    <property type="entry name" value="zf-FPG_IleRS"/>
    <property type="match status" value="1"/>
</dbReference>
<dbReference type="SMART" id="SM00898">
    <property type="entry name" value="Fapy_DNA_glyco"/>
    <property type="match status" value="1"/>
</dbReference>
<dbReference type="SMART" id="SM01232">
    <property type="entry name" value="H2TH"/>
    <property type="match status" value="1"/>
</dbReference>
<dbReference type="SUPFAM" id="SSF57716">
    <property type="entry name" value="Glucocorticoid receptor-like (DNA-binding domain)"/>
    <property type="match status" value="1"/>
</dbReference>
<dbReference type="SUPFAM" id="SSF81624">
    <property type="entry name" value="N-terminal domain of MutM-like DNA repair proteins"/>
    <property type="match status" value="1"/>
</dbReference>
<dbReference type="SUPFAM" id="SSF46946">
    <property type="entry name" value="S13-like H2TH domain"/>
    <property type="match status" value="1"/>
</dbReference>
<dbReference type="PROSITE" id="PS51068">
    <property type="entry name" value="FPG_CAT"/>
    <property type="match status" value="1"/>
</dbReference>
<dbReference type="PROSITE" id="PS01242">
    <property type="entry name" value="ZF_FPG_1"/>
    <property type="match status" value="1"/>
</dbReference>
<dbReference type="PROSITE" id="PS51066">
    <property type="entry name" value="ZF_FPG_2"/>
    <property type="match status" value="1"/>
</dbReference>
<organism>
    <name type="scientific">Escherichia coli (strain K12 / MC4100 / BW2952)</name>
    <dbReference type="NCBI Taxonomy" id="595496"/>
    <lineage>
        <taxon>Bacteria</taxon>
        <taxon>Pseudomonadati</taxon>
        <taxon>Pseudomonadota</taxon>
        <taxon>Gammaproteobacteria</taxon>
        <taxon>Enterobacterales</taxon>
        <taxon>Enterobacteriaceae</taxon>
        <taxon>Escherichia</taxon>
    </lineage>
</organism>
<sequence length="269" mass="30290">MPELPEVETSRRGIEPHLVGATILHAVVRNGRLRWPVSEEIYRLSDQPVLSVQRRAKYLLLELPEGWIIIHLGMSGSLRILPEELPPEKHDHVDLVMSNGKVLRYTDPRRFGAWLWTKELEGHNVLTHLGPEPLSDDFNGEYLHQKCAKKKTAIKPWLMDNKLVVGVGNIYASESLFAAGIHPDRLASSLSLAECELLARVIKAVLLRSIEQGGTTLKDFLQSDGKPGYFAQELQVYGRKGEPCRVCGTPIVATKHAQRATFYCRQCQK</sequence>
<comment type="function">
    <text evidence="2">Involved in base excision repair of DNA damaged by oxidation or by mutagenic agents. Acts as a DNA glycosylase that recognizes and removes damaged bases. Has a preference for oxidized purines, such as 7,8-dihydro-8-oxoguanine (8-oxoG). Has AP (apurinic/apyrimidinic) lyase activity and introduces nicks in the DNA strand. Cleaves the DNA backbone by beta-delta elimination to generate a single-strand break at the site of the removed base with both 3'- and 5'-phosphates.</text>
</comment>
<comment type="catalytic activity">
    <reaction evidence="2">
        <text>Hydrolysis of DNA containing ring-opened 7-methylguanine residues, releasing 2,6-diamino-4-hydroxy-5-(N-methyl)formamidopyrimidine.</text>
        <dbReference type="EC" id="3.2.2.23"/>
    </reaction>
</comment>
<comment type="catalytic activity">
    <reaction evidence="2">
        <text>2'-deoxyribonucleotide-(2'-deoxyribose 5'-phosphate)-2'-deoxyribonucleotide-DNA = a 3'-end 2'-deoxyribonucleotide-(2,3-dehydro-2,3-deoxyribose 5'-phosphate)-DNA + a 5'-end 5'-phospho-2'-deoxyribonucleoside-DNA + H(+)</text>
        <dbReference type="Rhea" id="RHEA:66592"/>
        <dbReference type="Rhea" id="RHEA-COMP:13180"/>
        <dbReference type="Rhea" id="RHEA-COMP:16897"/>
        <dbReference type="Rhea" id="RHEA-COMP:17067"/>
        <dbReference type="ChEBI" id="CHEBI:15378"/>
        <dbReference type="ChEBI" id="CHEBI:136412"/>
        <dbReference type="ChEBI" id="CHEBI:157695"/>
        <dbReference type="ChEBI" id="CHEBI:167181"/>
        <dbReference type="EC" id="4.2.99.18"/>
    </reaction>
</comment>
<comment type="cofactor">
    <cofactor evidence="2">
        <name>Zn(2+)</name>
        <dbReference type="ChEBI" id="CHEBI:29105"/>
    </cofactor>
    <text evidence="2">Binds 1 zinc ion per subunit.</text>
</comment>
<comment type="subunit">
    <text evidence="2">Monomer.</text>
</comment>
<comment type="similarity">
    <text evidence="2">Belongs to the FPG family.</text>
</comment>
<protein>
    <recommendedName>
        <fullName evidence="2">Formamidopyrimidine-DNA glycosylase</fullName>
        <shortName evidence="2">Fapy-DNA glycosylase</shortName>
        <ecNumber evidence="2">3.2.2.23</ecNumber>
    </recommendedName>
    <alternativeName>
        <fullName evidence="2">DNA-(apurinic or apyrimidinic site) lyase MutM</fullName>
        <shortName evidence="2">AP lyase MutM</shortName>
        <ecNumber evidence="2">4.2.99.18</ecNumber>
    </alternativeName>
</protein>
<accession>C4ZXM7</accession>
<evidence type="ECO:0000250" key="1"/>
<evidence type="ECO:0000255" key="2">
    <source>
        <dbReference type="HAMAP-Rule" id="MF_00103"/>
    </source>
</evidence>
<proteinExistence type="inferred from homology"/>
<keyword id="KW-0227">DNA damage</keyword>
<keyword id="KW-0234">DNA repair</keyword>
<keyword id="KW-0238">DNA-binding</keyword>
<keyword id="KW-0326">Glycosidase</keyword>
<keyword id="KW-0378">Hydrolase</keyword>
<keyword id="KW-0456">Lyase</keyword>
<keyword id="KW-0479">Metal-binding</keyword>
<keyword id="KW-0511">Multifunctional enzyme</keyword>
<keyword id="KW-0862">Zinc</keyword>
<keyword id="KW-0863">Zinc-finger</keyword>